<evidence type="ECO:0000255" key="1">
    <source>
        <dbReference type="HAMAP-Rule" id="MF_00013"/>
    </source>
</evidence>
<evidence type="ECO:0000255" key="2">
    <source>
        <dbReference type="PROSITE-ProRule" id="PRU01067"/>
    </source>
</evidence>
<evidence type="ECO:0000305" key="3"/>
<keyword id="KW-0012">Acyltransferase</keyword>
<keyword id="KW-0963">Cytoplasm</keyword>
<keyword id="KW-1185">Reference proteome</keyword>
<keyword id="KW-0808">Transferase</keyword>
<sequence length="217" mass="23857">MGLELGFRELGEVPYEPTWHAMQRFVAERDKSVMDEAWLLQHPAVFTQGQAGKAEHVLFPGDIPVIQVDRGGQVTYHGPGQLVTYLLLDVRRLGLGVRELVSRIEQSLIGLLASYDVQAVAKPDAPGVYVDGAKIASLGLRIRNGCSFHGLALNLDMDLRPFQRINPCGYAGMPMTQLRDLVGPVDFAEVCTRLRAELVSRLGYAEQKTLTGGIELT</sequence>
<proteinExistence type="inferred from homology"/>
<reference key="1">
    <citation type="submission" date="1999-05" db="EMBL/GenBank/DDBJ databases">
        <title>Cloning and characterization of PBP5 of Pseudomonas aeruginosa.</title>
        <authorList>
            <person name="Gagnon L.A."/>
            <person name="Castro-Urbina I.M."/>
            <person name="Liao X."/>
            <person name="Hancock R.E.W."/>
            <person name="Clarke A.J."/>
            <person name="Huletsky A."/>
        </authorList>
    </citation>
    <scope>NUCLEOTIDE SEQUENCE [GENOMIC DNA]</scope>
    <source>
        <strain>ATCC 15692 / DSM 22644 / CIP 104116 / JCM 14847 / LMG 12228 / 1C / PRS 101 / PAO1</strain>
    </source>
</reference>
<reference key="2">
    <citation type="journal article" date="2000" name="Nature">
        <title>Complete genome sequence of Pseudomonas aeruginosa PAO1, an opportunistic pathogen.</title>
        <authorList>
            <person name="Stover C.K."/>
            <person name="Pham X.-Q.T."/>
            <person name="Erwin A.L."/>
            <person name="Mizoguchi S.D."/>
            <person name="Warrener P."/>
            <person name="Hickey M.J."/>
            <person name="Brinkman F.S.L."/>
            <person name="Hufnagle W.O."/>
            <person name="Kowalik D.J."/>
            <person name="Lagrou M."/>
            <person name="Garber R.L."/>
            <person name="Goltry L."/>
            <person name="Tolentino E."/>
            <person name="Westbrock-Wadman S."/>
            <person name="Yuan Y."/>
            <person name="Brody L.L."/>
            <person name="Coulter S.N."/>
            <person name="Folger K.R."/>
            <person name="Kas A."/>
            <person name="Larbig K."/>
            <person name="Lim R.M."/>
            <person name="Smith K.A."/>
            <person name="Spencer D.H."/>
            <person name="Wong G.K.-S."/>
            <person name="Wu Z."/>
            <person name="Paulsen I.T."/>
            <person name="Reizer J."/>
            <person name="Saier M.H. Jr."/>
            <person name="Hancock R.E.W."/>
            <person name="Lory S."/>
            <person name="Olson M.V."/>
        </authorList>
    </citation>
    <scope>NUCLEOTIDE SEQUENCE [LARGE SCALE GENOMIC DNA]</scope>
    <source>
        <strain>ATCC 15692 / DSM 22644 / CIP 104116 / JCM 14847 / LMG 12228 / 1C / PRS 101 / PAO1</strain>
    </source>
</reference>
<comment type="function">
    <text evidence="1">Catalyzes the transfer of endogenously produced octanoic acid from octanoyl-acyl-carrier-protein onto the lipoyl domains of lipoate-dependent enzymes. Lipoyl-ACP can also act as a substrate although octanoyl-ACP is likely to be the physiological substrate.</text>
</comment>
<comment type="catalytic activity">
    <reaction evidence="1">
        <text>octanoyl-[ACP] + L-lysyl-[protein] = N(6)-octanoyl-L-lysyl-[protein] + holo-[ACP] + H(+)</text>
        <dbReference type="Rhea" id="RHEA:17665"/>
        <dbReference type="Rhea" id="RHEA-COMP:9636"/>
        <dbReference type="Rhea" id="RHEA-COMP:9685"/>
        <dbReference type="Rhea" id="RHEA-COMP:9752"/>
        <dbReference type="Rhea" id="RHEA-COMP:9928"/>
        <dbReference type="ChEBI" id="CHEBI:15378"/>
        <dbReference type="ChEBI" id="CHEBI:29969"/>
        <dbReference type="ChEBI" id="CHEBI:64479"/>
        <dbReference type="ChEBI" id="CHEBI:78463"/>
        <dbReference type="ChEBI" id="CHEBI:78809"/>
        <dbReference type="EC" id="2.3.1.181"/>
    </reaction>
</comment>
<comment type="pathway">
    <text evidence="1">Protein modification; protein lipoylation via endogenous pathway; protein N(6)-(lipoyl)lysine from octanoyl-[acyl-carrier-protein]: step 1/2.</text>
</comment>
<comment type="subcellular location">
    <subcellularLocation>
        <location evidence="1">Cytoplasm</location>
    </subcellularLocation>
</comment>
<comment type="miscellaneous">
    <text evidence="1">In the reaction, the free carboxyl group of octanoic acid is attached via an amide linkage to the epsilon-amino group of a specific lysine residue of lipoyl domains of lipoate-dependent enzymes.</text>
</comment>
<comment type="similarity">
    <text evidence="1">Belongs to the LipB family.</text>
</comment>
<comment type="sequence caution" evidence="3">
    <conflict type="erroneous initiation">
        <sequence resource="EMBL-CDS" id="AAD32236"/>
    </conflict>
    <text>Truncated N-terminus.</text>
</comment>
<dbReference type="EC" id="2.3.1.181" evidence="1"/>
<dbReference type="EMBL" id="AF147448">
    <property type="protein sequence ID" value="AAD32236.1"/>
    <property type="status" value="ALT_INIT"/>
    <property type="molecule type" value="Genomic_DNA"/>
</dbReference>
<dbReference type="EMBL" id="AE004091">
    <property type="protein sequence ID" value="AAG07384.1"/>
    <property type="molecule type" value="Genomic_DNA"/>
</dbReference>
<dbReference type="PIR" id="A83146">
    <property type="entry name" value="A83146"/>
</dbReference>
<dbReference type="RefSeq" id="NP_252686.1">
    <property type="nucleotide sequence ID" value="NC_002516.2"/>
</dbReference>
<dbReference type="RefSeq" id="WP_003093177.1">
    <property type="nucleotide sequence ID" value="NZ_QZGE01000038.1"/>
</dbReference>
<dbReference type="SMR" id="Q9X6V9"/>
<dbReference type="FunCoup" id="Q9X6V9">
    <property type="interactions" value="455"/>
</dbReference>
<dbReference type="STRING" id="208964.PA3997"/>
<dbReference type="PaxDb" id="208964-PA3997"/>
<dbReference type="DNASU" id="878952"/>
<dbReference type="GeneID" id="77219458"/>
<dbReference type="GeneID" id="878952"/>
<dbReference type="KEGG" id="pae:PA3997"/>
<dbReference type="PATRIC" id="fig|208964.12.peg.4189"/>
<dbReference type="PseudoCAP" id="PA3997"/>
<dbReference type="HOGENOM" id="CLU_035168_3_1_6"/>
<dbReference type="InParanoid" id="Q9X6V9"/>
<dbReference type="OrthoDB" id="9787061at2"/>
<dbReference type="PhylomeDB" id="Q9X6V9"/>
<dbReference type="BioCyc" id="PAER208964:G1FZ6-4070-MONOMER"/>
<dbReference type="UniPathway" id="UPA00538">
    <property type="reaction ID" value="UER00592"/>
</dbReference>
<dbReference type="Proteomes" id="UP000002438">
    <property type="component" value="Chromosome"/>
</dbReference>
<dbReference type="GO" id="GO:0005737">
    <property type="term" value="C:cytoplasm"/>
    <property type="evidence" value="ECO:0007669"/>
    <property type="project" value="UniProtKB-SubCell"/>
</dbReference>
<dbReference type="GO" id="GO:0033819">
    <property type="term" value="F:lipoyl(octanoyl) transferase activity"/>
    <property type="evidence" value="ECO:0000318"/>
    <property type="project" value="GO_Central"/>
</dbReference>
<dbReference type="GO" id="GO:0036211">
    <property type="term" value="P:protein modification process"/>
    <property type="evidence" value="ECO:0007669"/>
    <property type="project" value="InterPro"/>
</dbReference>
<dbReference type="CDD" id="cd16444">
    <property type="entry name" value="LipB"/>
    <property type="match status" value="1"/>
</dbReference>
<dbReference type="FunFam" id="3.30.930.10:FF:000020">
    <property type="entry name" value="Octanoyltransferase"/>
    <property type="match status" value="1"/>
</dbReference>
<dbReference type="Gene3D" id="3.30.930.10">
    <property type="entry name" value="Bira Bifunctional Protein, Domain 2"/>
    <property type="match status" value="1"/>
</dbReference>
<dbReference type="HAMAP" id="MF_00013">
    <property type="entry name" value="LipB"/>
    <property type="match status" value="1"/>
</dbReference>
<dbReference type="InterPro" id="IPR045864">
    <property type="entry name" value="aa-tRNA-synth_II/BPL/LPL"/>
</dbReference>
<dbReference type="InterPro" id="IPR004143">
    <property type="entry name" value="BPL_LPL_catalytic"/>
</dbReference>
<dbReference type="InterPro" id="IPR000544">
    <property type="entry name" value="Octanoyltransferase"/>
</dbReference>
<dbReference type="InterPro" id="IPR020605">
    <property type="entry name" value="Octanoyltransferase_CS"/>
</dbReference>
<dbReference type="NCBIfam" id="TIGR00214">
    <property type="entry name" value="lipB"/>
    <property type="match status" value="1"/>
</dbReference>
<dbReference type="NCBIfam" id="NF010922">
    <property type="entry name" value="PRK14342.1"/>
    <property type="match status" value="1"/>
</dbReference>
<dbReference type="PANTHER" id="PTHR10993:SF7">
    <property type="entry name" value="LIPOYLTRANSFERASE 2, MITOCHONDRIAL-RELATED"/>
    <property type="match status" value="1"/>
</dbReference>
<dbReference type="PANTHER" id="PTHR10993">
    <property type="entry name" value="OCTANOYLTRANSFERASE"/>
    <property type="match status" value="1"/>
</dbReference>
<dbReference type="Pfam" id="PF21948">
    <property type="entry name" value="LplA-B_cat"/>
    <property type="match status" value="1"/>
</dbReference>
<dbReference type="PIRSF" id="PIRSF016262">
    <property type="entry name" value="LPLase"/>
    <property type="match status" value="1"/>
</dbReference>
<dbReference type="SUPFAM" id="SSF55681">
    <property type="entry name" value="Class II aaRS and biotin synthetases"/>
    <property type="match status" value="1"/>
</dbReference>
<dbReference type="PROSITE" id="PS51733">
    <property type="entry name" value="BPL_LPL_CATALYTIC"/>
    <property type="match status" value="1"/>
</dbReference>
<dbReference type="PROSITE" id="PS01313">
    <property type="entry name" value="LIPB"/>
    <property type="match status" value="1"/>
</dbReference>
<accession>Q9X6V9</accession>
<protein>
    <recommendedName>
        <fullName evidence="1">Octanoyltransferase</fullName>
        <ecNumber evidence="1">2.3.1.181</ecNumber>
    </recommendedName>
    <alternativeName>
        <fullName evidence="1">Lipoate-protein ligase B</fullName>
    </alternativeName>
    <alternativeName>
        <fullName evidence="1">Lipoyl/octanoyl transferase</fullName>
    </alternativeName>
    <alternativeName>
        <fullName evidence="1">Octanoyl-[acyl-carrier-protein]-protein N-octanoyltransferase</fullName>
    </alternativeName>
</protein>
<feature type="chain" id="PRO_0000062866" description="Octanoyltransferase">
    <location>
        <begin position="1"/>
        <end position="217"/>
    </location>
</feature>
<feature type="domain" description="BPL/LPL catalytic" evidence="2">
    <location>
        <begin position="31"/>
        <end position="206"/>
    </location>
</feature>
<feature type="active site" description="Acyl-thioester intermediate" evidence="1">
    <location>
        <position position="168"/>
    </location>
</feature>
<feature type="binding site" evidence="1">
    <location>
        <begin position="70"/>
        <end position="77"/>
    </location>
    <ligand>
        <name>substrate</name>
    </ligand>
</feature>
<feature type="binding site" evidence="1">
    <location>
        <begin position="137"/>
        <end position="139"/>
    </location>
    <ligand>
        <name>substrate</name>
    </ligand>
</feature>
<feature type="binding site" evidence="1">
    <location>
        <begin position="150"/>
        <end position="152"/>
    </location>
    <ligand>
        <name>substrate</name>
    </ligand>
</feature>
<feature type="site" description="Lowers pKa of active site Cys" evidence="1">
    <location>
        <position position="134"/>
    </location>
</feature>
<organism>
    <name type="scientific">Pseudomonas aeruginosa (strain ATCC 15692 / DSM 22644 / CIP 104116 / JCM 14847 / LMG 12228 / 1C / PRS 101 / PAO1)</name>
    <dbReference type="NCBI Taxonomy" id="208964"/>
    <lineage>
        <taxon>Bacteria</taxon>
        <taxon>Pseudomonadati</taxon>
        <taxon>Pseudomonadota</taxon>
        <taxon>Gammaproteobacteria</taxon>
        <taxon>Pseudomonadales</taxon>
        <taxon>Pseudomonadaceae</taxon>
        <taxon>Pseudomonas</taxon>
    </lineage>
</organism>
<name>LIPB_PSEAE</name>
<gene>
    <name evidence="1" type="primary">lipB</name>
    <name type="ordered locus">PA3997</name>
</gene>